<sequence>MSQYASSSSWTSFLKSIASFNGDLSSLSAPPFILSPISLTEFSQYWAEHPELFLEPSFINDDNYKEHCLIDPEVESPELARMLAVTKWFISTLKSQYCSRNESLGSEKKPLNPFLGELFVGKWENKEHPEFGETVLLSEQVSHHPPVTAFSIFNDKNKVKLQGYNQIKASFTKSLMLTVKQFGHTMLDIKDESYLVTPPPLHIEGILVASPFVELEGKSYIQSSTGLLCVIEFSGRGYFSGKKNSFKARIYKDSKDSKDKEKALYTISGQWSGSSKIIKANKKEESRLFYDAARIPAEHLNVKPLEEQHPLESRKAWYDVAGAIKLGDFNLIAKTKTELEETQRELRKEEEAKGISWQRRWFKDFDYSVTPEEGALVPEKDDTFLKLASALNLSTKNAPSGTLVGDKEDRKEDLSSIHWRFQRELWDEEKEIVL</sequence>
<proteinExistence type="evidence at protein level"/>
<keyword id="KW-0002">3D-structure</keyword>
<keyword id="KW-0963">Cytoplasm</keyword>
<keyword id="KW-0333">Golgi apparatus</keyword>
<keyword id="KW-0445">Lipid transport</keyword>
<keyword id="KW-0446">Lipid-binding</keyword>
<keyword id="KW-0472">Membrane</keyword>
<keyword id="KW-0597">Phosphoprotein</keyword>
<keyword id="KW-1185">Reference proteome</keyword>
<keyword id="KW-0813">Transport</keyword>
<reference key="1">
    <citation type="journal article" date="1994" name="Yeast">
        <title>A new family of yeast genes implicated in ergosterol synthesis is related to the human oxysterol binding protein.</title>
        <authorList>
            <person name="Jiang B."/>
            <person name="Brown J.L."/>
            <person name="Sheraton J."/>
            <person name="Fortin N."/>
            <person name="Bussey H."/>
        </authorList>
    </citation>
    <scope>NUCLEOTIDE SEQUENCE [GENOMIC DNA]</scope>
</reference>
<reference key="2">
    <citation type="journal article" date="1996" name="Yeast">
        <title>The sequence of 55 kb on the left arm of yeast chromosome XVI identifies a small nuclear RNA, a new putative protein kinase and two new putative regulators.</title>
        <authorList>
            <person name="Purnelle B."/>
            <person name="Coster F."/>
            <person name="Goffeau A."/>
        </authorList>
    </citation>
    <scope>NUCLEOTIDE SEQUENCE [GENOMIC DNA]</scope>
    <source>
        <strain>ATCC 204511 / S288c / AB972</strain>
    </source>
</reference>
<reference key="3">
    <citation type="journal article" date="1997" name="Nature">
        <title>The nucleotide sequence of Saccharomyces cerevisiae chromosome XVI.</title>
        <authorList>
            <person name="Bussey H."/>
            <person name="Storms R.K."/>
            <person name="Ahmed A."/>
            <person name="Albermann K."/>
            <person name="Allen E."/>
            <person name="Ansorge W."/>
            <person name="Araujo R."/>
            <person name="Aparicio A."/>
            <person name="Barrell B.G."/>
            <person name="Badcock K."/>
            <person name="Benes V."/>
            <person name="Botstein D."/>
            <person name="Bowman S."/>
            <person name="Brueckner M."/>
            <person name="Carpenter J."/>
            <person name="Cherry J.M."/>
            <person name="Chung E."/>
            <person name="Churcher C.M."/>
            <person name="Coster F."/>
            <person name="Davis K."/>
            <person name="Davis R.W."/>
            <person name="Dietrich F.S."/>
            <person name="Delius H."/>
            <person name="DiPaolo T."/>
            <person name="Dubois E."/>
            <person name="Duesterhoeft A."/>
            <person name="Duncan M."/>
            <person name="Floeth M."/>
            <person name="Fortin N."/>
            <person name="Friesen J.D."/>
            <person name="Fritz C."/>
            <person name="Goffeau A."/>
            <person name="Hall J."/>
            <person name="Hebling U."/>
            <person name="Heumann K."/>
            <person name="Hilbert H."/>
            <person name="Hillier L.W."/>
            <person name="Hunicke-Smith S."/>
            <person name="Hyman R.W."/>
            <person name="Johnston M."/>
            <person name="Kalman S."/>
            <person name="Kleine K."/>
            <person name="Komp C."/>
            <person name="Kurdi O."/>
            <person name="Lashkari D."/>
            <person name="Lew H."/>
            <person name="Lin A."/>
            <person name="Lin D."/>
            <person name="Louis E.J."/>
            <person name="Marathe R."/>
            <person name="Messenguy F."/>
            <person name="Mewes H.-W."/>
            <person name="Mirtipati S."/>
            <person name="Moestl D."/>
            <person name="Mueller-Auer S."/>
            <person name="Namath A."/>
            <person name="Nentwich U."/>
            <person name="Oefner P."/>
            <person name="Pearson D."/>
            <person name="Petel F.X."/>
            <person name="Pohl T.M."/>
            <person name="Purnelle B."/>
            <person name="Rajandream M.A."/>
            <person name="Rechmann S."/>
            <person name="Rieger M."/>
            <person name="Riles L."/>
            <person name="Roberts D."/>
            <person name="Schaefer M."/>
            <person name="Scharfe M."/>
            <person name="Scherens B."/>
            <person name="Schramm S."/>
            <person name="Schroeder M."/>
            <person name="Sdicu A.-M."/>
            <person name="Tettelin H."/>
            <person name="Urrestarazu L.A."/>
            <person name="Ushinsky S."/>
            <person name="Vierendeels F."/>
            <person name="Vissers S."/>
            <person name="Voss H."/>
            <person name="Walsh S.V."/>
            <person name="Wambutt R."/>
            <person name="Wang Y."/>
            <person name="Wedler E."/>
            <person name="Wedler H."/>
            <person name="Winnett E."/>
            <person name="Zhong W.-W."/>
            <person name="Zollner A."/>
            <person name="Vo D.H."/>
            <person name="Hani J."/>
        </authorList>
    </citation>
    <scope>NUCLEOTIDE SEQUENCE [LARGE SCALE GENOMIC DNA]</scope>
    <source>
        <strain>ATCC 204508 / S288c</strain>
    </source>
</reference>
<reference key="4">
    <citation type="journal article" date="2014" name="G3 (Bethesda)">
        <title>The reference genome sequence of Saccharomyces cerevisiae: Then and now.</title>
        <authorList>
            <person name="Engel S.R."/>
            <person name="Dietrich F.S."/>
            <person name="Fisk D.G."/>
            <person name="Binkley G."/>
            <person name="Balakrishnan R."/>
            <person name="Costanzo M.C."/>
            <person name="Dwight S.S."/>
            <person name="Hitz B.C."/>
            <person name="Karra K."/>
            <person name="Nash R.S."/>
            <person name="Weng S."/>
            <person name="Wong E.D."/>
            <person name="Lloyd P."/>
            <person name="Skrzypek M.S."/>
            <person name="Miyasato S.R."/>
            <person name="Simison M."/>
            <person name="Cherry J.M."/>
        </authorList>
    </citation>
    <scope>GENOME REANNOTATION</scope>
    <source>
        <strain>ATCC 204508 / S288c</strain>
    </source>
</reference>
<reference key="5">
    <citation type="journal article" date="2007" name="Genome Res.">
        <title>Approaching a complete repository of sequence-verified protein-encoding clones for Saccharomyces cerevisiae.</title>
        <authorList>
            <person name="Hu Y."/>
            <person name="Rolfs A."/>
            <person name="Bhullar B."/>
            <person name="Murthy T.V.S."/>
            <person name="Zhu C."/>
            <person name="Berger M.F."/>
            <person name="Camargo A.A."/>
            <person name="Kelley F."/>
            <person name="McCarron S."/>
            <person name="Jepson D."/>
            <person name="Richardson A."/>
            <person name="Raphael J."/>
            <person name="Moreira D."/>
            <person name="Taycher E."/>
            <person name="Zuo D."/>
            <person name="Mohr S."/>
            <person name="Kane M.F."/>
            <person name="Williamson J."/>
            <person name="Simpson A.J.G."/>
            <person name="Bulyk M.L."/>
            <person name="Harlow E."/>
            <person name="Marsischky G."/>
            <person name="Kolodner R.D."/>
            <person name="LaBaer J."/>
        </authorList>
    </citation>
    <scope>NUCLEOTIDE SEQUENCE [GENOMIC DNA]</scope>
    <source>
        <strain>ATCC 204508 / S288c</strain>
    </source>
</reference>
<reference key="6">
    <citation type="journal article" date="1996" name="EMBO J.">
        <title>Kes1p shares homology with human oxysterol binding protein and participates in a novel regulatory pathway for yeast Golgi-derived transport vesicle biogenesis.</title>
        <authorList>
            <person name="Fang M."/>
            <person name="Kearns B.G."/>
            <person name="Gedvilaite A."/>
            <person name="Kagiwada S."/>
            <person name="Kearns M."/>
            <person name="Fung M.K."/>
            <person name="Bankaitis V.A."/>
        </authorList>
    </citation>
    <scope>FUNCTION</scope>
    <scope>SUBCELLULAR LOCATION</scope>
</reference>
<reference key="7">
    <citation type="journal article" date="2001" name="Genetics">
        <title>Overlapping functions of the yeast oxysterol-binding protein homologues.</title>
        <authorList>
            <person name="Beh C.T."/>
            <person name="Cool L."/>
            <person name="Phillips J."/>
            <person name="Rine J."/>
        </authorList>
    </citation>
    <scope>GENETIC ANALYSIS</scope>
</reference>
<reference key="8">
    <citation type="journal article" date="2002" name="J. Cell Biol.">
        <title>Analysis of oxysterol binding protein homologue Kes1p function in regulation of Sec14p-dependent protein transport from the yeast Golgi complex.</title>
        <authorList>
            <person name="Li X."/>
            <person name="Rivas M.P."/>
            <person name="Fang M."/>
            <person name="Marchena J."/>
            <person name="Mehrotra B."/>
            <person name="Chaudhary A."/>
            <person name="Feng L."/>
            <person name="Prestwich G.D."/>
            <person name="Bankaitis V.A."/>
        </authorList>
    </citation>
    <scope>SUBCELLULAR LOCATION</scope>
</reference>
<reference key="9">
    <citation type="journal article" date="2003" name="Nature">
        <title>Global analysis of protein expression in yeast.</title>
        <authorList>
            <person name="Ghaemmaghami S."/>
            <person name="Huh W.-K."/>
            <person name="Bower K."/>
            <person name="Howson R.W."/>
            <person name="Belle A."/>
            <person name="Dephoure N."/>
            <person name="O'Shea E.K."/>
            <person name="Weissman J.S."/>
        </authorList>
    </citation>
    <scope>LEVEL OF PROTEIN EXPRESSION [LARGE SCALE ANALYSIS]</scope>
</reference>
<reference key="10">
    <citation type="journal article" date="2004" name="J. Cell Sci.">
        <title>A role for yeast oxysterol-binding protein homologs in endocytosis and in the maintenance of intracellular sterol-lipid distribution.</title>
        <authorList>
            <person name="Beh C.T."/>
            <person name="Rine J."/>
        </authorList>
    </citation>
    <scope>FUNCTION</scope>
</reference>
<reference key="11">
    <citation type="journal article" date="2006" name="J. Cell Biol.">
        <title>Nonvesicular sterol movement from plasma membrane to ER requires oxysterol-binding protein-related proteins and phosphoinositides.</title>
        <authorList>
            <person name="Raychaudhuri S."/>
            <person name="Im Y.J."/>
            <person name="Hurley J.H."/>
            <person name="Prinz W.A."/>
        </authorList>
    </citation>
    <scope>FUNCTION</scope>
</reference>
<reference key="12">
    <citation type="journal article" date="2007" name="Nat. Struct. Mol. Biol.">
        <title>A general amphipathic alpha-helical motif for sensing membrane curvature.</title>
        <authorList>
            <person name="Drin G."/>
            <person name="Casella J.F."/>
            <person name="Gautier R."/>
            <person name="Boehmer T."/>
            <person name="Schwartz T.U."/>
            <person name="Antonny B."/>
        </authorList>
    </citation>
    <scope>DOMAIN</scope>
</reference>
<reference key="13">
    <citation type="journal article" date="2008" name="Mol. Cell. Proteomics">
        <title>A multidimensional chromatography technology for in-depth phosphoproteome analysis.</title>
        <authorList>
            <person name="Albuquerque C.P."/>
            <person name="Smolka M.B."/>
            <person name="Payne S.H."/>
            <person name="Bafna V."/>
            <person name="Eng J."/>
            <person name="Zhou H."/>
        </authorList>
    </citation>
    <scope>PHOSPHORYLATION [LARGE SCALE ANALYSIS] AT SER-389</scope>
    <scope>IDENTIFICATION BY MASS SPECTROMETRY [LARGE SCALE ANALYSIS]</scope>
</reference>
<reference key="14">
    <citation type="journal article" date="2009" name="J. Cell Biol.">
        <title>Lipid-regulated sterol transfer between closely apposed membranes by oxysterol-binding protein homologues.</title>
        <authorList>
            <person name="Schulz T.A."/>
            <person name="Choi M.G."/>
            <person name="Raychaudhuri S."/>
            <person name="Mears J.A."/>
            <person name="Ghirlando R."/>
            <person name="Hinshaw J.E."/>
            <person name="Prinz W.A."/>
        </authorList>
    </citation>
    <scope>FUNCTION</scope>
    <scope>DOMAIN</scope>
</reference>
<reference key="15">
    <citation type="journal article" date="2009" name="Science">
        <title>Global analysis of Cdk1 substrate phosphorylation sites provides insights into evolution.</title>
        <authorList>
            <person name="Holt L.J."/>
            <person name="Tuch B.B."/>
            <person name="Villen J."/>
            <person name="Johnson A.D."/>
            <person name="Gygi S.P."/>
            <person name="Morgan D.O."/>
        </authorList>
    </citation>
    <scope>PHOSPHORYLATION [LARGE SCALE ANALYSIS] AT THR-370</scope>
    <scope>IDENTIFICATION BY MASS SPECTROMETRY [LARGE SCALE ANALYSIS]</scope>
</reference>
<reference key="16">
    <citation type="journal article" date="2014" name="J. Cell Sci.">
        <title>Osh proteins regulate COPII-mediated vesicular transport of ceramide from the endoplasmic reticulum in budding yeast.</title>
        <authorList>
            <person name="Kajiwara K."/>
            <person name="Ikeda A."/>
            <person name="Aguilera-Romero A."/>
            <person name="Castillon G.A."/>
            <person name="Kagiwada S."/>
            <person name="Hanada K."/>
            <person name="Riezman H."/>
            <person name="Muniz M."/>
            <person name="Funato K."/>
        </authorList>
    </citation>
    <scope>FUNCTION</scope>
</reference>
<reference key="17">
    <citation type="journal article" date="2015" name="Nat. Commun.">
        <title>A phosphatidylinositol-4-phosphate powered exchange mechanism to create a lipid gradient between membranes.</title>
        <authorList>
            <person name="Moser von Filseck J."/>
            <person name="Vanni S."/>
            <person name="Mesmin B."/>
            <person name="Antonny B."/>
            <person name="Drin G."/>
        </authorList>
    </citation>
    <scope>FUNCTION</scope>
</reference>
<reference key="18">
    <citation type="journal article" date="2015" name="Science">
        <title>Phosphatidylserine transport by ORP/Osh proteins is driven by phosphatidylinositol 4-phosphate.</title>
        <authorList>
            <person name="Moser von Filseck J."/>
            <person name="Copic A."/>
            <person name="Delfosse V."/>
            <person name="Vanni S."/>
            <person name="Jackson C.L."/>
            <person name="Bourguet W."/>
            <person name="Drin G."/>
        </authorList>
    </citation>
    <scope>MUTAGENESIS OF 143-HIS-HIS-144</scope>
</reference>
<reference key="19">
    <citation type="journal article" date="2018" name="J. Biol. Chem.">
        <title>Oxysterol-binding protein homologs mediate sterol transport from the endoplasmic reticulum to mitochondria in yeast.</title>
        <authorList>
            <person name="Tian S."/>
            <person name="Ohta A."/>
            <person name="Horiuchi H."/>
            <person name="Fukuda R."/>
        </authorList>
    </citation>
    <scope>FUNCTION</scope>
</reference>
<reference evidence="20 21 22 23 24 25" key="20">
    <citation type="journal article" date="2005" name="Nature">
        <title>Structural mechanism for sterol sensing and transport by OSBP-related proteins.</title>
        <authorList>
            <person name="Im Y.J."/>
            <person name="Raychaudhuri S."/>
            <person name="Prinz W.A."/>
            <person name="Hurley J.H."/>
        </authorList>
    </citation>
    <scope>X-RAY CRYSTALLOGRAPHY (1.50 ANGSTROMS) OF 2-434 IN COMPLEXES WITH 20-HYDROXYCHOLESTEROL; 25-HYDROXYCHOLESTEROL; 7BETA-HYDROXYCHOLESTEROL; CHOLESTEROL AND ERGOSTEROL</scope>
    <scope>FUNCTION</scope>
    <scope>DOMAIN</scope>
    <scope>MUTAGENESIS OF TYR-97; LYS-109; LEU-111; GLU-117; 143-HIS-HIS-144; LYS-168; LYS-336 AND ARG-344</scope>
</reference>
<reference key="21">
    <citation type="journal article" date="2011" name="J. Cell Biol.">
        <title>Osh4p exchanges sterols for phosphatidylinositol 4-phosphate between lipid bilayers.</title>
        <authorList>
            <person name="de Saint-Jean M."/>
            <person name="Delfosse V."/>
            <person name="Douguet D."/>
            <person name="Chicanne G."/>
            <person name="Payrastre B."/>
            <person name="Bourguet W."/>
            <person name="Antonny B."/>
            <person name="Drin G."/>
        </authorList>
    </citation>
    <scope>X-RAY CRYSTALLOGRAPHY (2.60 ANGSTROMS) IN COMPLEX WITH PHOSPHATIDYLINOSITOL 4-PHOSPHATE</scope>
    <scope>FUNCTION</scope>
    <scope>MUTAGENESIS OF LYS-109; ASN-112; 143-HIS-HIS-144; 202-HIS--GLU-204; LYS-336; GLU-340 AND ARG-344</scope>
</reference>
<reference key="22">
    <citation type="journal article" date="2013" name="Steroids">
        <title>Synthesis and structure of 16,22-diketocholesterol bound to oxysterol-binding protein Osh4.</title>
        <authorList>
            <person name="Koag M.C."/>
            <person name="Cheun Y."/>
            <person name="Kou Y."/>
            <person name="Ouzon-Shubeita H."/>
            <person name="Min K."/>
            <person name="Monzingo A.F."/>
            <person name="Lee S."/>
        </authorList>
    </citation>
    <scope>X-RAY CRYSTALLOGRAPHY (1.87 ANGSTROMS) OF 2-434 IN COMPLEX WITH STEROL</scope>
</reference>
<gene>
    <name evidence="15" type="primary">KES1</name>
    <name evidence="16" type="synonym">BSR3</name>
    <name evidence="14" type="synonym">OSH4</name>
    <name evidence="19" type="ordered locus">YPL145C</name>
    <name type="ORF">LPI3C</name>
    <name type="ORF">P2614</name>
</gene>
<organism>
    <name type="scientific">Saccharomyces cerevisiae (strain ATCC 204508 / S288c)</name>
    <name type="common">Baker's yeast</name>
    <dbReference type="NCBI Taxonomy" id="559292"/>
    <lineage>
        <taxon>Eukaryota</taxon>
        <taxon>Fungi</taxon>
        <taxon>Dikarya</taxon>
        <taxon>Ascomycota</taxon>
        <taxon>Saccharomycotina</taxon>
        <taxon>Saccharomycetes</taxon>
        <taxon>Saccharomycetales</taxon>
        <taxon>Saccharomycetaceae</taxon>
        <taxon>Saccharomyces</taxon>
    </lineage>
</organism>
<dbReference type="EMBL" id="U03913">
    <property type="protein sequence ID" value="AAA17736.1"/>
    <property type="molecule type" value="Unassigned_DNA"/>
</dbReference>
<dbReference type="EMBL" id="U43703">
    <property type="protein sequence ID" value="AAB68217.1"/>
    <property type="molecule type" value="Genomic_DNA"/>
</dbReference>
<dbReference type="EMBL" id="X96770">
    <property type="protein sequence ID" value="CAA65548.1"/>
    <property type="molecule type" value="Genomic_DNA"/>
</dbReference>
<dbReference type="EMBL" id="Z73501">
    <property type="protein sequence ID" value="CAA97849.1"/>
    <property type="molecule type" value="Genomic_DNA"/>
</dbReference>
<dbReference type="EMBL" id="AY558047">
    <property type="protein sequence ID" value="AAS56373.1"/>
    <property type="molecule type" value="Genomic_DNA"/>
</dbReference>
<dbReference type="EMBL" id="BK006949">
    <property type="protein sequence ID" value="DAA11290.1"/>
    <property type="molecule type" value="Genomic_DNA"/>
</dbReference>
<dbReference type="PIR" id="S42676">
    <property type="entry name" value="S42676"/>
</dbReference>
<dbReference type="RefSeq" id="NP_015180.1">
    <property type="nucleotide sequence ID" value="NM_001183959.1"/>
</dbReference>
<dbReference type="PDB" id="1ZHT">
    <property type="method" value="X-ray"/>
    <property type="resolution" value="1.90 A"/>
    <property type="chains" value="A=2-434"/>
</dbReference>
<dbReference type="PDB" id="1ZHW">
    <property type="method" value="X-ray"/>
    <property type="resolution" value="1.70 A"/>
    <property type="chains" value="A=2-434"/>
</dbReference>
<dbReference type="PDB" id="1ZHX">
    <property type="method" value="X-ray"/>
    <property type="resolution" value="1.50 A"/>
    <property type="chains" value="A=2-434"/>
</dbReference>
<dbReference type="PDB" id="1ZHY">
    <property type="method" value="X-ray"/>
    <property type="resolution" value="1.60 A"/>
    <property type="chains" value="A=2-434"/>
</dbReference>
<dbReference type="PDB" id="1ZHZ">
    <property type="method" value="X-ray"/>
    <property type="resolution" value="1.90 A"/>
    <property type="chains" value="A=2-434"/>
</dbReference>
<dbReference type="PDB" id="1ZI7">
    <property type="method" value="X-ray"/>
    <property type="resolution" value="2.50 A"/>
    <property type="chains" value="A/B/C=30-434"/>
</dbReference>
<dbReference type="PDB" id="3SPW">
    <property type="method" value="X-ray"/>
    <property type="resolution" value="2.60 A"/>
    <property type="chains" value="A/B=1-434"/>
</dbReference>
<dbReference type="PDB" id="4F4B">
    <property type="method" value="X-ray"/>
    <property type="resolution" value="1.87 A"/>
    <property type="chains" value="A/B=2-434"/>
</dbReference>
<dbReference type="PDB" id="4FES">
    <property type="method" value="X-ray"/>
    <property type="resolution" value="2.00 A"/>
    <property type="chains" value="A/B=2-434"/>
</dbReference>
<dbReference type="PDB" id="4JCH">
    <property type="method" value="X-ray"/>
    <property type="resolution" value="1.70 A"/>
    <property type="chains" value="A/B=2-434"/>
</dbReference>
<dbReference type="PDBsum" id="1ZHT"/>
<dbReference type="PDBsum" id="1ZHW"/>
<dbReference type="PDBsum" id="1ZHX"/>
<dbReference type="PDBsum" id="1ZHY"/>
<dbReference type="PDBsum" id="1ZHZ"/>
<dbReference type="PDBsum" id="1ZI7"/>
<dbReference type="PDBsum" id="3SPW"/>
<dbReference type="PDBsum" id="4F4B"/>
<dbReference type="PDBsum" id="4FES"/>
<dbReference type="PDBsum" id="4JCH"/>
<dbReference type="SMR" id="P35844"/>
<dbReference type="BioGRID" id="36038">
    <property type="interactions" value="310"/>
</dbReference>
<dbReference type="DIP" id="DIP-2867N"/>
<dbReference type="FunCoup" id="P35844">
    <property type="interactions" value="132"/>
</dbReference>
<dbReference type="IntAct" id="P35844">
    <property type="interactions" value="13"/>
</dbReference>
<dbReference type="MINT" id="P35844"/>
<dbReference type="STRING" id="4932.YPL145C"/>
<dbReference type="GlyGen" id="P35844">
    <property type="glycosylation" value="1 site"/>
</dbReference>
<dbReference type="iPTMnet" id="P35844"/>
<dbReference type="PaxDb" id="4932-YPL145C"/>
<dbReference type="PeptideAtlas" id="P35844"/>
<dbReference type="EnsemblFungi" id="YPL145C_mRNA">
    <property type="protein sequence ID" value="YPL145C"/>
    <property type="gene ID" value="YPL145C"/>
</dbReference>
<dbReference type="GeneID" id="855958"/>
<dbReference type="KEGG" id="sce:YPL145C"/>
<dbReference type="AGR" id="SGD:S000006066"/>
<dbReference type="SGD" id="S000006066">
    <property type="gene designation" value="KES1"/>
</dbReference>
<dbReference type="VEuPathDB" id="FungiDB:YPL145C"/>
<dbReference type="eggNOG" id="KOG2210">
    <property type="taxonomic scope" value="Eukaryota"/>
</dbReference>
<dbReference type="GeneTree" id="ENSGT00940000176691"/>
<dbReference type="HOGENOM" id="CLU_012334_0_0_1"/>
<dbReference type="InParanoid" id="P35844"/>
<dbReference type="OMA" id="SSYWTEH"/>
<dbReference type="OrthoDB" id="14833at2759"/>
<dbReference type="BioCyc" id="YEAST:G3O-34042-MONOMER"/>
<dbReference type="Reactome" id="R-SCE-1482801">
    <property type="pathway name" value="Acyl chain remodelling of PS"/>
</dbReference>
<dbReference type="Reactome" id="R-SCE-192105">
    <property type="pathway name" value="Synthesis of bile acids and bile salts"/>
</dbReference>
<dbReference type="BioGRID-ORCS" id="855958">
    <property type="hits" value="2 hits in 10 CRISPR screens"/>
</dbReference>
<dbReference type="CD-CODE" id="E03F929F">
    <property type="entry name" value="Stress granule"/>
</dbReference>
<dbReference type="EvolutionaryTrace" id="P35844"/>
<dbReference type="PRO" id="PR:P35844"/>
<dbReference type="Proteomes" id="UP000002311">
    <property type="component" value="Chromosome XVI"/>
</dbReference>
<dbReference type="RNAct" id="P35844">
    <property type="molecule type" value="protein"/>
</dbReference>
<dbReference type="GO" id="GO:0005737">
    <property type="term" value="C:cytoplasm"/>
    <property type="evidence" value="ECO:0000314"/>
    <property type="project" value="SGD"/>
</dbReference>
<dbReference type="GO" id="GO:0005829">
    <property type="term" value="C:cytosol"/>
    <property type="evidence" value="ECO:0007005"/>
    <property type="project" value="SGD"/>
</dbReference>
<dbReference type="GO" id="GO:0000139">
    <property type="term" value="C:Golgi membrane"/>
    <property type="evidence" value="ECO:0000314"/>
    <property type="project" value="SGD"/>
</dbReference>
<dbReference type="GO" id="GO:0016020">
    <property type="term" value="C:membrane"/>
    <property type="evidence" value="ECO:0000318"/>
    <property type="project" value="GO_Central"/>
</dbReference>
<dbReference type="GO" id="GO:0008289">
    <property type="term" value="F:lipid binding"/>
    <property type="evidence" value="ECO:0000314"/>
    <property type="project" value="SGD"/>
</dbReference>
<dbReference type="GO" id="GO:0008142">
    <property type="term" value="F:oxysterol binding"/>
    <property type="evidence" value="ECO:0000315"/>
    <property type="project" value="SGD"/>
</dbReference>
<dbReference type="GO" id="GO:0070300">
    <property type="term" value="F:phosphatidic acid binding"/>
    <property type="evidence" value="ECO:0000314"/>
    <property type="project" value="SGD"/>
</dbReference>
<dbReference type="GO" id="GO:0005546">
    <property type="term" value="F:phosphatidylinositol-4,5-bisphosphate binding"/>
    <property type="evidence" value="ECO:0000315"/>
    <property type="project" value="SGD"/>
</dbReference>
<dbReference type="GO" id="GO:0070273">
    <property type="term" value="F:phosphatidylinositol-4-phosphate binding"/>
    <property type="evidence" value="ECO:0000314"/>
    <property type="project" value="UniProtKB"/>
</dbReference>
<dbReference type="GO" id="GO:0120015">
    <property type="term" value="F:sterol transfer activity"/>
    <property type="evidence" value="ECO:0000314"/>
    <property type="project" value="SGD"/>
</dbReference>
<dbReference type="GO" id="GO:0006897">
    <property type="term" value="P:endocytosis"/>
    <property type="evidence" value="ECO:0000316"/>
    <property type="project" value="SGD"/>
</dbReference>
<dbReference type="GO" id="GO:0035621">
    <property type="term" value="P:ER to Golgi ceramide transport"/>
    <property type="evidence" value="ECO:0000315"/>
    <property type="project" value="SGD"/>
</dbReference>
<dbReference type="GO" id="GO:0006887">
    <property type="term" value="P:exocytosis"/>
    <property type="evidence" value="ECO:0000316"/>
    <property type="project" value="SGD"/>
</dbReference>
<dbReference type="GO" id="GO:0030011">
    <property type="term" value="P:maintenance of cell polarity"/>
    <property type="evidence" value="ECO:0000316"/>
    <property type="project" value="SGD"/>
</dbReference>
<dbReference type="GO" id="GO:0034727">
    <property type="term" value="P:piecemeal microautophagy of the nucleus"/>
    <property type="evidence" value="ECO:0000316"/>
    <property type="project" value="SGD"/>
</dbReference>
<dbReference type="GO" id="GO:0006892">
    <property type="term" value="P:post-Golgi vesicle-mediated transport"/>
    <property type="evidence" value="ECO:0000316"/>
    <property type="project" value="SGD"/>
</dbReference>
<dbReference type="GO" id="GO:0006665">
    <property type="term" value="P:sphingolipid metabolic process"/>
    <property type="evidence" value="ECO:0000315"/>
    <property type="project" value="SGD"/>
</dbReference>
<dbReference type="GO" id="GO:0015918">
    <property type="term" value="P:sterol transport"/>
    <property type="evidence" value="ECO:0000314"/>
    <property type="project" value="UniProtKB"/>
</dbReference>
<dbReference type="FunFam" id="2.40.160.120:FF:000010">
    <property type="entry name" value="Oxysterol-binding protein homolog 4"/>
    <property type="match status" value="1"/>
</dbReference>
<dbReference type="FunFam" id="3.30.70.3490:FF:000012">
    <property type="entry name" value="Oxysterol-binding protein homolog 4"/>
    <property type="match status" value="1"/>
</dbReference>
<dbReference type="Gene3D" id="1.10.287.2720">
    <property type="match status" value="1"/>
</dbReference>
<dbReference type="Gene3D" id="2.40.160.120">
    <property type="match status" value="1"/>
</dbReference>
<dbReference type="Gene3D" id="3.30.70.3490">
    <property type="match status" value="1"/>
</dbReference>
<dbReference type="Gene3D" id="6.10.250.1430">
    <property type="match status" value="1"/>
</dbReference>
<dbReference type="InterPro" id="IPR037239">
    <property type="entry name" value="OSBP_sf"/>
</dbReference>
<dbReference type="InterPro" id="IPR000648">
    <property type="entry name" value="Oxysterol-bd"/>
</dbReference>
<dbReference type="InterPro" id="IPR018494">
    <property type="entry name" value="Oxysterol-bd_CS"/>
</dbReference>
<dbReference type="PANTHER" id="PTHR10972:SF184">
    <property type="entry name" value="OXYSTEROL-BINDING PROTEIN HOMOLOG 4-RELATED"/>
    <property type="match status" value="1"/>
</dbReference>
<dbReference type="PANTHER" id="PTHR10972">
    <property type="entry name" value="OXYSTEROL-BINDING PROTEIN-RELATED"/>
    <property type="match status" value="1"/>
</dbReference>
<dbReference type="Pfam" id="PF01237">
    <property type="entry name" value="Oxysterol_BP"/>
    <property type="match status" value="1"/>
</dbReference>
<dbReference type="SUPFAM" id="SSF144000">
    <property type="entry name" value="Oxysterol-binding protein-like"/>
    <property type="match status" value="1"/>
</dbReference>
<dbReference type="PROSITE" id="PS01013">
    <property type="entry name" value="OSBP"/>
    <property type="match status" value="1"/>
</dbReference>
<feature type="chain" id="PRO_0000100386" description="Oxysterol-binding protein homolog 4">
    <location>
        <begin position="1"/>
        <end position="434"/>
    </location>
</feature>
<feature type="region of interest" description="ALPS motif" evidence="18">
    <location>
        <begin position="7"/>
        <end position="29"/>
    </location>
</feature>
<feature type="region of interest" description="OSBP-related domain (ORD)" evidence="17">
    <location>
        <begin position="16"/>
        <end position="366"/>
    </location>
</feature>
<feature type="binding site" evidence="8 26">
    <location>
        <begin position="24"/>
        <end position="29"/>
    </location>
    <ligand>
        <name>a 1,2-diacyl-sn-glycero-3-phospho-(1D-myo-inositol 4-phosphate)</name>
        <dbReference type="ChEBI" id="CHEBI:58178"/>
    </ligand>
</feature>
<feature type="binding site" evidence="4 21">
    <location>
        <position position="96"/>
    </location>
    <ligand>
        <name>20-hydroxycholesterol</name>
        <dbReference type="ChEBI" id="CHEBI:1296"/>
    </ligand>
</feature>
<feature type="binding site" evidence="22">
    <location>
        <position position="96"/>
    </location>
    <ligand>
        <name>25-hydroxycholesterol</name>
        <dbReference type="ChEBI" id="CHEBI:42977"/>
    </ligand>
</feature>
<feature type="binding site" evidence="20">
    <location>
        <position position="96"/>
    </location>
    <ligand>
        <name>7beta-hydroxycholesterol</name>
        <dbReference type="ChEBI" id="CHEBI:42989"/>
    </ligand>
</feature>
<feature type="binding site" evidence="23">
    <location>
        <position position="96"/>
    </location>
    <ligand>
        <name>cholesterol</name>
        <dbReference type="ChEBI" id="CHEBI:16113"/>
    </ligand>
</feature>
<feature type="binding site" evidence="24">
    <location>
        <position position="96"/>
    </location>
    <ligand>
        <name>ergosterol</name>
        <dbReference type="ChEBI" id="CHEBI:16933"/>
    </ligand>
</feature>
<feature type="binding site" evidence="20">
    <location>
        <position position="100"/>
    </location>
    <ligand>
        <name>7beta-hydroxycholesterol</name>
        <dbReference type="ChEBI" id="CHEBI:42989"/>
    </ligand>
</feature>
<feature type="binding site" evidence="8 26">
    <location>
        <begin position="109"/>
        <end position="112"/>
    </location>
    <ligand>
        <name>a 1,2-diacyl-sn-glycero-3-phospho-(1D-myo-inositol 4-phosphate)</name>
        <dbReference type="ChEBI" id="CHEBI:58178"/>
    </ligand>
</feature>
<feature type="binding site" evidence="8 26">
    <location>
        <begin position="143"/>
        <end position="144"/>
    </location>
    <ligand>
        <name>a 1,2-diacyl-sn-glycero-3-phospho-(1D-myo-inositol 4-phosphate)</name>
        <dbReference type="ChEBI" id="CHEBI:58178"/>
    </ligand>
</feature>
<feature type="binding site" evidence="8 26">
    <location>
        <position position="336"/>
    </location>
    <ligand>
        <name>a 1,2-diacyl-sn-glycero-3-phospho-(1D-myo-inositol 4-phosphate)</name>
        <dbReference type="ChEBI" id="CHEBI:58178"/>
    </ligand>
</feature>
<feature type="binding site" evidence="8 26">
    <location>
        <position position="340"/>
    </location>
    <ligand>
        <name>a 1,2-diacyl-sn-glycero-3-phospho-(1D-myo-inositol 4-phosphate)</name>
        <dbReference type="ChEBI" id="CHEBI:58178"/>
    </ligand>
</feature>
<feature type="binding site" evidence="8 26">
    <location>
        <position position="344"/>
    </location>
    <ligand>
        <name>a 1,2-diacyl-sn-glycero-3-phospho-(1D-myo-inositol 4-phosphate)</name>
        <dbReference type="ChEBI" id="CHEBI:58178"/>
    </ligand>
</feature>
<feature type="modified residue" description="Phosphothreonine" evidence="28">
    <location>
        <position position="370"/>
    </location>
</feature>
<feature type="modified residue" description="Phosphoserine" evidence="27">
    <location>
        <position position="389"/>
    </location>
</feature>
<feature type="mutagenesis site" description="Abolishes both cholesterol binding and biological function." evidence="4">
    <original>Y</original>
    <variation>F</variation>
    <location>
        <position position="97"/>
    </location>
</feature>
<feature type="mutagenesis site" description="Strong reduction in cholesterol transport. Abolishes binding to phosphatidylinositol 4-phosphate." evidence="4 8">
    <original>K</original>
    <variation>A</variation>
    <location>
        <position position="109"/>
    </location>
</feature>
<feature type="mutagenesis site" description="Abolishes both cholesterol binding and biological function." evidence="4">
    <original>L</original>
    <variation>D</variation>
    <location>
        <position position="111"/>
    </location>
</feature>
<feature type="mutagenesis site" description="Abolishes binding to phosphatidylinositol 4-phosphate." evidence="8">
    <original>N</original>
    <variation>E</variation>
    <location>
        <position position="112"/>
    </location>
</feature>
<feature type="mutagenesis site" description="Abolishes both cholesterol binding and biological function." evidence="4">
    <original>E</original>
    <variation>A</variation>
    <location>
        <position position="117"/>
    </location>
</feature>
<feature type="mutagenesis site" description="Reduction in cholesterol transport. Abolishes binding to phosphatidylinositol 4-phosphate." evidence="4 8 11">
    <original>HH</original>
    <variation>AA</variation>
    <location>
        <begin position="143"/>
        <end position="144"/>
    </location>
</feature>
<feature type="mutagenesis site" description="Slight reduction in cholesterol transport." evidence="4">
    <original>K</original>
    <variation>A</variation>
    <location>
        <position position="168"/>
    </location>
</feature>
<feature type="mutagenesis site" description="Strong reduction in cholesterol transport." evidence="4">
    <original>K</original>
    <variation>A</variation>
    <location>
        <position position="168"/>
    </location>
</feature>
<feature type="mutagenesis site" description="Strong reduction in cholesterol binding without affecting phosphatidylinositol 4-phosphate binding." evidence="8">
    <original>HIE</original>
    <variation>AIA</variation>
    <location>
        <begin position="202"/>
        <end position="204"/>
    </location>
</feature>
<feature type="mutagenesis site" description="Strong reduction in cholesterol transport. Abolishes binding to phosphatidylinositol 4-phosphate." evidence="4 8">
    <original>K</original>
    <variation>A</variation>
    <location>
        <position position="336"/>
    </location>
</feature>
<feature type="mutagenesis site" description="Abolishes binding to phosphatidylinositol 4-phosphate." evidence="8">
    <original>E</original>
    <variation>A</variation>
    <location>
        <position position="340"/>
    </location>
</feature>
<feature type="mutagenesis site" description="Slight reduction in cholesterol transport. Abolishes binding to phosphatidylinositol 4-phosphate." evidence="4 8">
    <original>R</original>
    <variation>A</variation>
    <location>
        <position position="344"/>
    </location>
</feature>
<feature type="sequence conflict" description="In Ref. 5; AAS56373." evidence="17" ref="5">
    <original>I</original>
    <variation>T</variation>
    <location>
        <position position="355"/>
    </location>
</feature>
<feature type="turn" evidence="29">
    <location>
        <begin position="4"/>
        <end position="6"/>
    </location>
</feature>
<feature type="helix" evidence="29">
    <location>
        <begin position="8"/>
        <end position="15"/>
    </location>
</feature>
<feature type="turn" evidence="29">
    <location>
        <begin position="16"/>
        <end position="19"/>
    </location>
</feature>
<feature type="helix" evidence="29">
    <location>
        <begin position="24"/>
        <end position="26"/>
    </location>
</feature>
<feature type="helix" evidence="29">
    <location>
        <begin position="31"/>
        <end position="33"/>
    </location>
</feature>
<feature type="strand" evidence="29">
    <location>
        <begin position="34"/>
        <end position="38"/>
    </location>
</feature>
<feature type="helix" evidence="29">
    <location>
        <begin position="39"/>
        <end position="46"/>
    </location>
</feature>
<feature type="strand" evidence="30">
    <location>
        <begin position="47"/>
        <end position="49"/>
    </location>
</feature>
<feature type="helix" evidence="29">
    <location>
        <begin position="50"/>
        <end position="54"/>
    </location>
</feature>
<feature type="helix" evidence="29">
    <location>
        <begin position="55"/>
        <end position="58"/>
    </location>
</feature>
<feature type="turn" evidence="29">
    <location>
        <begin position="61"/>
        <end position="63"/>
    </location>
</feature>
<feature type="helix" evidence="29">
    <location>
        <begin position="64"/>
        <end position="66"/>
    </location>
</feature>
<feature type="helix" evidence="29">
    <location>
        <begin position="77"/>
        <end position="104"/>
    </location>
</feature>
<feature type="strand" evidence="29">
    <location>
        <begin position="109"/>
        <end position="111"/>
    </location>
</feature>
<feature type="strand" evidence="29">
    <location>
        <begin position="118"/>
        <end position="123"/>
    </location>
</feature>
<feature type="turn" evidence="29">
    <location>
        <begin position="129"/>
        <end position="131"/>
    </location>
</feature>
<feature type="strand" evidence="29">
    <location>
        <begin position="134"/>
        <end position="142"/>
    </location>
</feature>
<feature type="turn" evidence="29">
    <location>
        <begin position="143"/>
        <end position="146"/>
    </location>
</feature>
<feature type="strand" evidence="29">
    <location>
        <begin position="147"/>
        <end position="154"/>
    </location>
</feature>
<feature type="turn" evidence="29">
    <location>
        <begin position="155"/>
        <end position="158"/>
    </location>
</feature>
<feature type="strand" evidence="29">
    <location>
        <begin position="159"/>
        <end position="171"/>
    </location>
</feature>
<feature type="strand" evidence="30">
    <location>
        <begin position="173"/>
        <end position="175"/>
    </location>
</feature>
<feature type="strand" evidence="29">
    <location>
        <begin position="177"/>
        <end position="182"/>
    </location>
</feature>
<feature type="strand" evidence="29">
    <location>
        <begin position="185"/>
        <end position="189"/>
    </location>
</feature>
<feature type="strand" evidence="29">
    <location>
        <begin position="192"/>
        <end position="197"/>
    </location>
</feature>
<feature type="strand" evidence="29">
    <location>
        <begin position="201"/>
        <end position="204"/>
    </location>
</feature>
<feature type="turn" evidence="29">
    <location>
        <begin position="206"/>
        <end position="209"/>
    </location>
</feature>
<feature type="strand" evidence="29">
    <location>
        <begin position="212"/>
        <end position="215"/>
    </location>
</feature>
<feature type="strand" evidence="29">
    <location>
        <begin position="217"/>
        <end position="223"/>
    </location>
</feature>
<feature type="strand" evidence="29">
    <location>
        <begin position="228"/>
        <end position="234"/>
    </location>
</feature>
<feature type="strand" evidence="29">
    <location>
        <begin position="236"/>
        <end position="239"/>
    </location>
</feature>
<feature type="strand" evidence="29">
    <location>
        <begin position="241"/>
        <end position="253"/>
    </location>
</feature>
<feature type="helix" evidence="29">
    <location>
        <begin position="256"/>
        <end position="258"/>
    </location>
</feature>
<feature type="helix" evidence="29">
    <location>
        <begin position="260"/>
        <end position="262"/>
    </location>
</feature>
<feature type="strand" evidence="29">
    <location>
        <begin position="264"/>
        <end position="270"/>
    </location>
</feature>
<feature type="strand" evidence="29">
    <location>
        <begin position="273"/>
        <end position="279"/>
    </location>
</feature>
<feature type="helix" evidence="29">
    <location>
        <begin position="283"/>
        <end position="285"/>
    </location>
</feature>
<feature type="strand" evidence="29">
    <location>
        <begin position="287"/>
        <end position="291"/>
    </location>
</feature>
<feature type="turn" evidence="29">
    <location>
        <begin position="292"/>
        <end position="294"/>
    </location>
</feature>
<feature type="helix" evidence="29">
    <location>
        <begin position="305"/>
        <end position="307"/>
    </location>
</feature>
<feature type="helix" evidence="29">
    <location>
        <begin position="313"/>
        <end position="316"/>
    </location>
</feature>
<feature type="helix" evidence="29">
    <location>
        <begin position="318"/>
        <end position="326"/>
    </location>
</feature>
<feature type="helix" evidence="29">
    <location>
        <begin position="329"/>
        <end position="353"/>
    </location>
</feature>
<feature type="helix" evidence="30">
    <location>
        <begin position="357"/>
        <end position="359"/>
    </location>
</feature>
<feature type="strand" evidence="29">
    <location>
        <begin position="360"/>
        <end position="366"/>
    </location>
</feature>
<feature type="strand" evidence="29">
    <location>
        <begin position="368"/>
        <end position="370"/>
    </location>
</feature>
<feature type="helix" evidence="29">
    <location>
        <begin position="383"/>
        <end position="391"/>
    </location>
</feature>
<feature type="strand" evidence="29">
    <location>
        <begin position="396"/>
        <end position="399"/>
    </location>
</feature>
<feature type="helix" evidence="29">
    <location>
        <begin position="407"/>
        <end position="410"/>
    </location>
</feature>
<feature type="strand" evidence="29">
    <location>
        <begin position="417"/>
        <end position="421"/>
    </location>
</feature>
<feature type="helix" evidence="29">
    <location>
        <begin position="423"/>
        <end position="427"/>
    </location>
</feature>
<protein>
    <recommendedName>
        <fullName evidence="14">Oxysterol-binding protein homolog 4</fullName>
    </recommendedName>
    <alternativeName>
        <fullName evidence="16">Bypass SECl4 recessive protein 3</fullName>
    </alternativeName>
    <alternativeName>
        <fullName evidence="15">KRE11-1 suppressor protein 1</fullName>
        <shortName evidence="15">Protein KES1</shortName>
    </alternativeName>
    <alternativeName>
        <fullName>Oxysterol-binding protein-related protein 4</fullName>
        <shortName>ORP 4</shortName>
        <shortName>OSBP-related protein 4</shortName>
    </alternativeName>
</protein>
<evidence type="ECO:0000269" key="1">
    <source>
    </source>
</evidence>
<evidence type="ECO:0000269" key="2">
    <source>
    </source>
</evidence>
<evidence type="ECO:0000269" key="3">
    <source>
    </source>
</evidence>
<evidence type="ECO:0000269" key="4">
    <source>
    </source>
</evidence>
<evidence type="ECO:0000269" key="5">
    <source>
    </source>
</evidence>
<evidence type="ECO:0000269" key="6">
    <source>
    </source>
</evidence>
<evidence type="ECO:0000269" key="7">
    <source>
    </source>
</evidence>
<evidence type="ECO:0000269" key="8">
    <source>
    </source>
</evidence>
<evidence type="ECO:0000269" key="9">
    <source>
    </source>
</evidence>
<evidence type="ECO:0000269" key="10">
    <source>
    </source>
</evidence>
<evidence type="ECO:0000269" key="11">
    <source>
    </source>
</evidence>
<evidence type="ECO:0000269" key="12">
    <source>
    </source>
</evidence>
<evidence type="ECO:0000269" key="13">
    <source>
    </source>
</evidence>
<evidence type="ECO:0000303" key="14">
    <source>
    </source>
</evidence>
<evidence type="ECO:0000303" key="15">
    <source>
    </source>
</evidence>
<evidence type="ECO:0000303" key="16">
    <source>
    </source>
</evidence>
<evidence type="ECO:0000305" key="17"/>
<evidence type="ECO:0000305" key="18">
    <source>
    </source>
</evidence>
<evidence type="ECO:0000312" key="19">
    <source>
        <dbReference type="SGD" id="S000006066"/>
    </source>
</evidence>
<evidence type="ECO:0007744" key="20">
    <source>
        <dbReference type="PDB" id="1ZHT"/>
    </source>
</evidence>
<evidence type="ECO:0007744" key="21">
    <source>
        <dbReference type="PDB" id="1ZHW"/>
    </source>
</evidence>
<evidence type="ECO:0007744" key="22">
    <source>
        <dbReference type="PDB" id="1ZHX"/>
    </source>
</evidence>
<evidence type="ECO:0007744" key="23">
    <source>
        <dbReference type="PDB" id="1ZHY"/>
    </source>
</evidence>
<evidence type="ECO:0007744" key="24">
    <source>
        <dbReference type="PDB" id="1ZHZ"/>
    </source>
</evidence>
<evidence type="ECO:0007744" key="25">
    <source>
        <dbReference type="PDB" id="1ZI7"/>
    </source>
</evidence>
<evidence type="ECO:0007744" key="26">
    <source>
        <dbReference type="PDB" id="3SPW"/>
    </source>
</evidence>
<evidence type="ECO:0007744" key="27">
    <source>
    </source>
</evidence>
<evidence type="ECO:0007744" key="28">
    <source>
    </source>
</evidence>
<evidence type="ECO:0007829" key="29">
    <source>
        <dbReference type="PDB" id="1ZHX"/>
    </source>
</evidence>
<evidence type="ECO:0007829" key="30">
    <source>
        <dbReference type="PDB" id="1ZI7"/>
    </source>
</evidence>
<comment type="function">
    <text evidence="3 4 5 7 8 9 10 12 13">Lipid transport protein (LTP) involved in non-vesicular transfer of lipids between membranes. Functions in phosphoinositide-coupled directional transport of various lipids by carrying the lipid molecule in a hydrophobic pocket and transferring it between membranes through the cytosol. Involved in maintenance of intracellular sterol distribution and homeostasis (PubMed:15173322, PubMed:16136145, PubMed:20008566, PubMed:22162133). Involved in lipid countertransport between the Golgi complex and membranes of the endoplasmic reticulum. Specifically exchanges sterol with phosphatidylinositol 4-phosphate (PI4P), delivering sterol to the Golgi in exchange for PI4P, which is delivered to the ER-localized PI4P phosphatase SAC1 for degradation. Thus, by maintaining a PI4P gradient at the ER/Golgi interface, SAC1 may drive PS transport (PubMed:16136145, PubMed:22162133, PubMed:25849868). Displays a similar affinity for PI4P and sterols (PubMed:22162133). Binds sterol and PI4P in a mutually exclusive manner (PubMed:22162133). Involved in ergosterol transport from the plasma membrane (PM) to the ER (PubMed:16585271). Mediates sterol transport from the ER to mitochondria (PubMed:29487131). Involved in the negative regulation of Golgi-derived transport vesicle biogenesis (PubMed:8978672). Plays a role in the positive regulation of vesicular transport of ceramide from the ER to the Golgi, negatively regulating COPII-mediated ER export of cargos (PubMed:24213531).</text>
</comment>
<comment type="subcellular location">
    <subcellularLocation>
        <location evidence="13">Cytoplasm</location>
    </subcellularLocation>
    <subcellularLocation>
        <location evidence="1">Golgi apparatus membrane</location>
    </subcellularLocation>
</comment>
<comment type="domain">
    <text evidence="4 7 8">The OSBP-related domain (ORD) mediates binding of sterols and phospholipids. It displays an incomplete beta-barrel containing a central hydrophobic tunnel that can accommodate a single lipid molecule with a flexible lid covering the tunnel entrance. The ORD can bind two membranes simultaneously. It has at least two membrane-binding surfaces; one near the mouth of the lipid-binding pocket and a distal site that can bind a second membrane. These structural features correlate with the phosphatidylinositol 4-phosphate (PI(4)P)-coupled lipid transport optimized in closely apposed membranes, such as organelle contact sites. The lipid transfer cycle starts from the association of the LTP with a donor membrane, which accompanies conformational changes that uncover the ligand-binding pocket. The tunnel opening is generally mediated by displacement of the lid covering the binding pocket allowing uptake or release of a lipid molecule. The LTPs extract the lipid from the membrane by providing a hydrophobic environment as well as specific interaction. Dissociation from the donor membrane shifts the conformation to a closed form. Then, the LTPs loaded with a cargo lipid diffuse through the aqueous phase. Lid opening may be induced by the interaction of a hydrophobic side of the lid with the target membranes.</text>
</comment>
<comment type="domain">
    <text evidence="6">The ArfGAP1 lipid packing sensor (ALPS) motif is a membrane-binding motif that is sensitive to curvature.</text>
</comment>
<comment type="miscellaneous">
    <text evidence="2">Present with 32200 molecules/cell in log phase SD medium.</text>
</comment>
<comment type="similarity">
    <text evidence="17">Belongs to the OSBP family.</text>
</comment>
<accession>P35844</accession>
<accession>D6W3M4</accession>
<accession>E9P8U8</accession>
<name>KES1_YEAST</name>